<evidence type="ECO:0000255" key="1">
    <source>
        <dbReference type="HAMAP-Rule" id="MF_00161"/>
    </source>
</evidence>
<name>LSPA_YERP3</name>
<gene>
    <name evidence="1" type="primary">lspA</name>
    <name type="ordered locus">YpsIP31758_3459</name>
</gene>
<dbReference type="EC" id="3.4.23.36" evidence="1"/>
<dbReference type="EMBL" id="CP000720">
    <property type="protein sequence ID" value="ABS46732.1"/>
    <property type="molecule type" value="Genomic_DNA"/>
</dbReference>
<dbReference type="RefSeq" id="WP_012105694.1">
    <property type="nucleotide sequence ID" value="NC_009708.1"/>
</dbReference>
<dbReference type="SMR" id="A7FMD6"/>
<dbReference type="MEROPS" id="A08.001"/>
<dbReference type="KEGG" id="ypi:YpsIP31758_3459"/>
<dbReference type="HOGENOM" id="CLU_083252_4_0_6"/>
<dbReference type="UniPathway" id="UPA00665"/>
<dbReference type="Proteomes" id="UP000002412">
    <property type="component" value="Chromosome"/>
</dbReference>
<dbReference type="GO" id="GO:0005886">
    <property type="term" value="C:plasma membrane"/>
    <property type="evidence" value="ECO:0007669"/>
    <property type="project" value="UniProtKB-SubCell"/>
</dbReference>
<dbReference type="GO" id="GO:0004190">
    <property type="term" value="F:aspartic-type endopeptidase activity"/>
    <property type="evidence" value="ECO:0007669"/>
    <property type="project" value="UniProtKB-UniRule"/>
</dbReference>
<dbReference type="GO" id="GO:0006508">
    <property type="term" value="P:proteolysis"/>
    <property type="evidence" value="ECO:0007669"/>
    <property type="project" value="UniProtKB-KW"/>
</dbReference>
<dbReference type="HAMAP" id="MF_00161">
    <property type="entry name" value="LspA"/>
    <property type="match status" value="1"/>
</dbReference>
<dbReference type="InterPro" id="IPR001872">
    <property type="entry name" value="Peptidase_A8"/>
</dbReference>
<dbReference type="NCBIfam" id="TIGR00077">
    <property type="entry name" value="lspA"/>
    <property type="match status" value="1"/>
</dbReference>
<dbReference type="PANTHER" id="PTHR33695">
    <property type="entry name" value="LIPOPROTEIN SIGNAL PEPTIDASE"/>
    <property type="match status" value="1"/>
</dbReference>
<dbReference type="PANTHER" id="PTHR33695:SF1">
    <property type="entry name" value="LIPOPROTEIN SIGNAL PEPTIDASE"/>
    <property type="match status" value="1"/>
</dbReference>
<dbReference type="Pfam" id="PF01252">
    <property type="entry name" value="Peptidase_A8"/>
    <property type="match status" value="1"/>
</dbReference>
<dbReference type="PRINTS" id="PR00781">
    <property type="entry name" value="LIPOSIGPTASE"/>
</dbReference>
<dbReference type="PROSITE" id="PS00855">
    <property type="entry name" value="SPASE_II"/>
    <property type="match status" value="1"/>
</dbReference>
<reference key="1">
    <citation type="journal article" date="2007" name="PLoS Genet.">
        <title>The complete genome sequence of Yersinia pseudotuberculosis IP31758, the causative agent of Far East scarlet-like fever.</title>
        <authorList>
            <person name="Eppinger M."/>
            <person name="Rosovitz M.J."/>
            <person name="Fricke W.F."/>
            <person name="Rasko D.A."/>
            <person name="Kokorina G."/>
            <person name="Fayolle C."/>
            <person name="Lindler L.E."/>
            <person name="Carniel E."/>
            <person name="Ravel J."/>
        </authorList>
    </citation>
    <scope>NUCLEOTIDE SEQUENCE [LARGE SCALE GENOMIC DNA]</scope>
    <source>
        <strain>IP 31758</strain>
    </source>
</reference>
<keyword id="KW-0064">Aspartyl protease</keyword>
<keyword id="KW-0997">Cell inner membrane</keyword>
<keyword id="KW-1003">Cell membrane</keyword>
<keyword id="KW-0378">Hydrolase</keyword>
<keyword id="KW-0472">Membrane</keyword>
<keyword id="KW-0645">Protease</keyword>
<keyword id="KW-0812">Transmembrane</keyword>
<keyword id="KW-1133">Transmembrane helix</keyword>
<comment type="function">
    <text evidence="1">This protein specifically catalyzes the removal of signal peptides from prolipoproteins.</text>
</comment>
<comment type="catalytic activity">
    <reaction evidence="1">
        <text>Release of signal peptides from bacterial membrane prolipoproteins. Hydrolyzes -Xaa-Yaa-Zaa-|-(S,diacylglyceryl)Cys-, in which Xaa is hydrophobic (preferably Leu), and Yaa (Ala or Ser) and Zaa (Gly or Ala) have small, neutral side chains.</text>
        <dbReference type="EC" id="3.4.23.36"/>
    </reaction>
</comment>
<comment type="pathway">
    <text evidence="1">Protein modification; lipoprotein biosynthesis (signal peptide cleavage).</text>
</comment>
<comment type="subcellular location">
    <subcellularLocation>
        <location evidence="1">Cell inner membrane</location>
        <topology evidence="1">Multi-pass membrane protein</topology>
    </subcellularLocation>
</comment>
<comment type="similarity">
    <text evidence="1">Belongs to the peptidase A8 family.</text>
</comment>
<feature type="chain" id="PRO_1000058240" description="Lipoprotein signal peptidase">
    <location>
        <begin position="1"/>
        <end position="169"/>
    </location>
</feature>
<feature type="transmembrane region" description="Helical" evidence="1">
    <location>
        <begin position="4"/>
        <end position="24"/>
    </location>
</feature>
<feature type="transmembrane region" description="Helical" evidence="1">
    <location>
        <begin position="29"/>
        <end position="49"/>
    </location>
</feature>
<feature type="transmembrane region" description="Helical" evidence="1">
    <location>
        <begin position="70"/>
        <end position="90"/>
    </location>
</feature>
<feature type="transmembrane region" description="Helical" evidence="1">
    <location>
        <begin position="101"/>
        <end position="121"/>
    </location>
</feature>
<feature type="transmembrane region" description="Helical" evidence="1">
    <location>
        <begin position="137"/>
        <end position="157"/>
    </location>
</feature>
<feature type="active site" evidence="1">
    <location>
        <position position="123"/>
    </location>
</feature>
<feature type="active site" evidence="1">
    <location>
        <position position="141"/>
    </location>
</feature>
<organism>
    <name type="scientific">Yersinia pseudotuberculosis serotype O:1b (strain IP 31758)</name>
    <dbReference type="NCBI Taxonomy" id="349747"/>
    <lineage>
        <taxon>Bacteria</taxon>
        <taxon>Pseudomonadati</taxon>
        <taxon>Pseudomonadota</taxon>
        <taxon>Gammaproteobacteria</taxon>
        <taxon>Enterobacterales</taxon>
        <taxon>Yersiniaceae</taxon>
        <taxon>Yersinia</taxon>
    </lineage>
</organism>
<proteinExistence type="inferred from homology"/>
<sequence>MNKPICSTGLRWLWLAVVVVILDISSKQWVMAHFALYESVPLIPFFNLTYAQNFGAAFSFLADKSGWQRWFFAGIAIGISVVLMVMMYRSTAKQRLINCAYALIIGGALGNLYDRLVHGAVNDFLDFYINNWHFPTFNLADVAISIGAVLVIFEGFLSPAEKNAVNKNE</sequence>
<accession>A7FMD6</accession>
<protein>
    <recommendedName>
        <fullName evidence="1">Lipoprotein signal peptidase</fullName>
        <ecNumber evidence="1">3.4.23.36</ecNumber>
    </recommendedName>
    <alternativeName>
        <fullName evidence="1">Prolipoprotein signal peptidase</fullName>
    </alternativeName>
    <alternativeName>
        <fullName evidence="1">Signal peptidase II</fullName>
        <shortName evidence="1">SPase II</shortName>
    </alternativeName>
</protein>